<sequence>MSQKELAALVATRTSRKRTISSTSFSISTRTDPKSIIEIHIFNDSLPIKRACCEVENPTLKAEQRVQQEEESLGQVPPLTEEEQQRHDEFRNSGSIFLQDLPCFKLQQAQPIAGSSPIPKCRECRRRNLATTEGEPSSVSDVYCRFYEFRRLQFNENGELCVVGFPNPYSEPSPEDIAIWQPDKNTPPTSGYMDIQVCRYILLHAGDQFCYIWHQEAEALSLHQNTDGTIAWKKAVKGTREICDVCDTTLFNYHWTCRKCGFGVCLDCVKDRKEGLRLRRAENAAQKGCDEYHWLLCSDPSGPQEHVLTELMLTQIIAGDALNVLGRLLHEVRTLWQVPQVCGCLLSKQAIEDAQSKEVIQDMIKESQLKQHTSYSSLASEQKVHQQQRLDQLHATKLEFARELGVDYVPGRVWTKETLGKDPITTAFDNLKHINFLRKGLAGLRRFLPPRTMTFAYSTQLAPGVPHEFLCDGRLLRLTDAMHPDNRVLFQEVWKCGQPVMISEVARSLNLDLWHPQAFCRDFGDKPNDLINCLNGNLVPNQPMRHFWEGFQCMTKRLPDAYGKPMLLKLKDWPPGDDFAEILPTRFADLMKGLPMPEYTLRTGNLNIASCLPKMFVPPDLGPKMYNAYGSALHPDKGTTNLHLDISDAVNIMVYVGIPQDGDTRPQMAATQKAIEIGGCDYITRARCQSPDVLPGALWHIFPARDADKIRDLLNRVTLEKGFRLEPDHDPIHDQNWYLDDKLRARLFKEYGVEGHPIVQCLGDAVFIPAGAPHQVQNLHNCIKVAEDFVSPENITHCYHLTHEFRRLSHSHTNHEDKLQIKNIIYHAIKDCCTILTRAVDERLNAELTKLNAD</sequence>
<name>KDM3_DROME</name>
<evidence type="ECO:0000250" key="1">
    <source>
        <dbReference type="UniProtKB" id="Q9Y4C1"/>
    </source>
</evidence>
<evidence type="ECO:0000255" key="2">
    <source>
        <dbReference type="PROSITE-ProRule" id="PRU00538"/>
    </source>
</evidence>
<evidence type="ECO:0000256" key="3">
    <source>
        <dbReference type="SAM" id="MobiDB-lite"/>
    </source>
</evidence>
<evidence type="ECO:0000269" key="4">
    <source>
    </source>
</evidence>
<evidence type="ECO:0000269" key="5">
    <source>
    </source>
</evidence>
<evidence type="ECO:0000269" key="6">
    <source>
    </source>
</evidence>
<evidence type="ECO:0000269" key="7">
    <source>
    </source>
</evidence>
<evidence type="ECO:0000305" key="8"/>
<evidence type="ECO:0000312" key="9">
    <source>
        <dbReference type="EMBL" id="AAO41470.1"/>
    </source>
</evidence>
<evidence type="ECO:0000312" key="10">
    <source>
        <dbReference type="FlyBase" id="FBgn0037703"/>
    </source>
</evidence>
<evidence type="ECO:0000312" key="11">
    <source>
        <dbReference type="Proteomes" id="UP000000803"/>
    </source>
</evidence>
<accession>Q9VHC5</accession>
<gene>
    <name evidence="10" type="primary">Kdm3</name>
    <name evidence="10" type="synonym">JHDM2</name>
    <name evidence="10" type="ORF">CG8165</name>
</gene>
<keyword id="KW-0963">Cytoplasm</keyword>
<keyword id="KW-0408">Iron</keyword>
<keyword id="KW-0479">Metal-binding</keyword>
<keyword id="KW-0539">Nucleus</keyword>
<keyword id="KW-0560">Oxidoreductase</keyword>
<keyword id="KW-1185">Reference proteome</keyword>
<feature type="chain" id="PRO_0000462174" description="Lysine-specific demethylase 3">
    <location>
        <begin position="1"/>
        <end position="854"/>
    </location>
</feature>
<feature type="domain" description="JmjC" evidence="2">
    <location>
        <begin position="601"/>
        <end position="806"/>
    </location>
</feature>
<feature type="region of interest" description="Disordered" evidence="3">
    <location>
        <begin position="64"/>
        <end position="88"/>
    </location>
</feature>
<feature type="binding site" evidence="2">
    <location>
        <position position="643"/>
    </location>
    <ligand>
        <name>Fe cation</name>
        <dbReference type="ChEBI" id="CHEBI:24875"/>
        <note>catalytic</note>
    </ligand>
</feature>
<feature type="binding site" evidence="2">
    <location>
        <position position="645"/>
    </location>
    <ligand>
        <name>Fe cation</name>
        <dbReference type="ChEBI" id="CHEBI:24875"/>
        <note>catalytic</note>
    </ligand>
</feature>
<feature type="binding site" evidence="2">
    <location>
        <position position="774"/>
    </location>
    <ligand>
        <name>Fe cation</name>
        <dbReference type="ChEBI" id="CHEBI:24875"/>
        <note>catalytic</note>
    </ligand>
</feature>
<comment type="function">
    <text evidence="4 6 7 8">Histone demethylase that specifically demethylates 'Lys-10' of histone H3 (H3K9), thereby playing a central role in histone code (PubMed:37027460). Demethylation of Lys residue generates formaldehyde and succinate (Probable). Probably involved in regulation of chromatin structure, promoting expansion of euchromatin (PubMed:28701701). Negatively regulates rhino-dependent piRNA production capacity of several genomic regions; may help define the frontiers of piRNA clusters by regulating histone methylation levels (PubMed:37027460). May be involved in regulation of behavior and circadian rhythms (PubMed:29339751).</text>
</comment>
<comment type="catalytic activity">
    <reaction evidence="1">
        <text>N(6),N(6)-dimethyl-L-lysyl(9)-[histone H3] + 2 2-oxoglutarate + 2 O2 = L-lysyl(9)-[histone H3] + 2 formaldehyde + 2 succinate + 2 CO2</text>
        <dbReference type="Rhea" id="RHEA:60188"/>
        <dbReference type="Rhea" id="RHEA-COMP:15541"/>
        <dbReference type="Rhea" id="RHEA-COMP:15546"/>
        <dbReference type="ChEBI" id="CHEBI:15379"/>
        <dbReference type="ChEBI" id="CHEBI:16526"/>
        <dbReference type="ChEBI" id="CHEBI:16810"/>
        <dbReference type="ChEBI" id="CHEBI:16842"/>
        <dbReference type="ChEBI" id="CHEBI:29969"/>
        <dbReference type="ChEBI" id="CHEBI:30031"/>
        <dbReference type="ChEBI" id="CHEBI:61976"/>
        <dbReference type="EC" id="1.14.11.65"/>
    </reaction>
</comment>
<comment type="cofactor">
    <cofactor evidence="1">
        <name>Fe(2+)</name>
        <dbReference type="ChEBI" id="CHEBI:29033"/>
    </cofactor>
    <text evidence="1">Binds 1 Fe(2+) ion per subunit.</text>
</comment>
<comment type="subcellular location">
    <subcellularLocation>
        <location evidence="4 6">Nucleus</location>
    </subcellularLocation>
    <subcellularLocation>
        <location evidence="4">Cytoplasm</location>
    </subcellularLocation>
</comment>
<comment type="tissue specificity">
    <text evidence="6">Expressed in neurons close to the dorsal lateral neurons involved in circadian rhythm.</text>
</comment>
<comment type="disruption phenotype">
    <text evidence="4 5 6 7">Viable but adults do not produce viable offspring (PubMed:28701701, PubMed:37027460). Adults show high incidence of an arrhythmic circadian rhythm phenotype with increased period length (PubMed:29339751). Adults also show reduced levels of starvation-induced hyperactivity (PubMed:29339751). Adults have increased sensitivity to ethanol-induced sedation and decreased tolerance buildup following repeated ethanol exposure (PubMed:28940624). RNAi-mediated knockdown in germ cells of adult females severely impairs the hatching rate of offspring; this phenotype is partially reversed in the presence of RNAi-mediated knockdown of egg/eggless (PubMed:37027460). Offspring show defects in mouth formation and loss of denticle rows in the anterior region of the abdomen (PubMed:37027460). Pan-neuronal RNAi-mediated knockdown increases sensitivity to ethanol-induced sedation and decreases tolerance buildup following repeated ethanol exposure (PubMed:28940624).</text>
</comment>
<comment type="miscellaneous">
    <text evidence="7">Shares a promoter with CG8176, which produces a bicistronic pre-mRNA encoding both genes. Alternative splicing results in mature mRNAs encoding either Kdm3 or CG8176. Efficient production of mRNAs encoding Kdm3 requires the splicing factor hfp.</text>
</comment>
<comment type="similarity">
    <text evidence="8">Belongs to the JHDM2-like histone demethylase family.</text>
</comment>
<organism evidence="11">
    <name type="scientific">Drosophila melanogaster</name>
    <name type="common">Fruit fly</name>
    <dbReference type="NCBI Taxonomy" id="7227"/>
    <lineage>
        <taxon>Eukaryota</taxon>
        <taxon>Metazoa</taxon>
        <taxon>Ecdysozoa</taxon>
        <taxon>Arthropoda</taxon>
        <taxon>Hexapoda</taxon>
        <taxon>Insecta</taxon>
        <taxon>Pterygota</taxon>
        <taxon>Neoptera</taxon>
        <taxon>Endopterygota</taxon>
        <taxon>Diptera</taxon>
        <taxon>Brachycera</taxon>
        <taxon>Muscomorpha</taxon>
        <taxon>Ephydroidea</taxon>
        <taxon>Drosophilidae</taxon>
        <taxon>Drosophila</taxon>
        <taxon>Sophophora</taxon>
    </lineage>
</organism>
<reference evidence="11" key="1">
    <citation type="journal article" date="2000" name="Science">
        <title>The genome sequence of Drosophila melanogaster.</title>
        <authorList>
            <person name="Adams M.D."/>
            <person name="Celniker S.E."/>
            <person name="Holt R.A."/>
            <person name="Evans C.A."/>
            <person name="Gocayne J.D."/>
            <person name="Amanatides P.G."/>
            <person name="Scherer S.E."/>
            <person name="Li P.W."/>
            <person name="Hoskins R.A."/>
            <person name="Galle R.F."/>
            <person name="George R.A."/>
            <person name="Lewis S.E."/>
            <person name="Richards S."/>
            <person name="Ashburner M."/>
            <person name="Henderson S.N."/>
            <person name="Sutton G.G."/>
            <person name="Wortman J.R."/>
            <person name="Yandell M.D."/>
            <person name="Zhang Q."/>
            <person name="Chen L.X."/>
            <person name="Brandon R.C."/>
            <person name="Rogers Y.-H.C."/>
            <person name="Blazej R.G."/>
            <person name="Champe M."/>
            <person name="Pfeiffer B.D."/>
            <person name="Wan K.H."/>
            <person name="Doyle C."/>
            <person name="Baxter E.G."/>
            <person name="Helt G."/>
            <person name="Nelson C.R."/>
            <person name="Miklos G.L.G."/>
            <person name="Abril J.F."/>
            <person name="Agbayani A."/>
            <person name="An H.-J."/>
            <person name="Andrews-Pfannkoch C."/>
            <person name="Baldwin D."/>
            <person name="Ballew R.M."/>
            <person name="Basu A."/>
            <person name="Baxendale J."/>
            <person name="Bayraktaroglu L."/>
            <person name="Beasley E.M."/>
            <person name="Beeson K.Y."/>
            <person name="Benos P.V."/>
            <person name="Berman B.P."/>
            <person name="Bhandari D."/>
            <person name="Bolshakov S."/>
            <person name="Borkova D."/>
            <person name="Botchan M.R."/>
            <person name="Bouck J."/>
            <person name="Brokstein P."/>
            <person name="Brottier P."/>
            <person name="Burtis K.C."/>
            <person name="Busam D.A."/>
            <person name="Butler H."/>
            <person name="Cadieu E."/>
            <person name="Center A."/>
            <person name="Chandra I."/>
            <person name="Cherry J.M."/>
            <person name="Cawley S."/>
            <person name="Dahlke C."/>
            <person name="Davenport L.B."/>
            <person name="Davies P."/>
            <person name="de Pablos B."/>
            <person name="Delcher A."/>
            <person name="Deng Z."/>
            <person name="Mays A.D."/>
            <person name="Dew I."/>
            <person name="Dietz S.M."/>
            <person name="Dodson K."/>
            <person name="Doup L.E."/>
            <person name="Downes M."/>
            <person name="Dugan-Rocha S."/>
            <person name="Dunkov B.C."/>
            <person name="Dunn P."/>
            <person name="Durbin K.J."/>
            <person name="Evangelista C.C."/>
            <person name="Ferraz C."/>
            <person name="Ferriera S."/>
            <person name="Fleischmann W."/>
            <person name="Fosler C."/>
            <person name="Gabrielian A.E."/>
            <person name="Garg N.S."/>
            <person name="Gelbart W.M."/>
            <person name="Glasser K."/>
            <person name="Glodek A."/>
            <person name="Gong F."/>
            <person name="Gorrell J.H."/>
            <person name="Gu Z."/>
            <person name="Guan P."/>
            <person name="Harris M."/>
            <person name="Harris N.L."/>
            <person name="Harvey D.A."/>
            <person name="Heiman T.J."/>
            <person name="Hernandez J.R."/>
            <person name="Houck J."/>
            <person name="Hostin D."/>
            <person name="Houston K.A."/>
            <person name="Howland T.J."/>
            <person name="Wei M.-H."/>
            <person name="Ibegwam C."/>
            <person name="Jalali M."/>
            <person name="Kalush F."/>
            <person name="Karpen G.H."/>
            <person name="Ke Z."/>
            <person name="Kennison J.A."/>
            <person name="Ketchum K.A."/>
            <person name="Kimmel B.E."/>
            <person name="Kodira C.D."/>
            <person name="Kraft C.L."/>
            <person name="Kravitz S."/>
            <person name="Kulp D."/>
            <person name="Lai Z."/>
            <person name="Lasko P."/>
            <person name="Lei Y."/>
            <person name="Levitsky A.A."/>
            <person name="Li J.H."/>
            <person name="Li Z."/>
            <person name="Liang Y."/>
            <person name="Lin X."/>
            <person name="Liu X."/>
            <person name="Mattei B."/>
            <person name="McIntosh T.C."/>
            <person name="McLeod M.P."/>
            <person name="McPherson D."/>
            <person name="Merkulov G."/>
            <person name="Milshina N.V."/>
            <person name="Mobarry C."/>
            <person name="Morris J."/>
            <person name="Moshrefi A."/>
            <person name="Mount S.M."/>
            <person name="Moy M."/>
            <person name="Murphy B."/>
            <person name="Murphy L."/>
            <person name="Muzny D.M."/>
            <person name="Nelson D.L."/>
            <person name="Nelson D.R."/>
            <person name="Nelson K.A."/>
            <person name="Nixon K."/>
            <person name="Nusskern D.R."/>
            <person name="Pacleb J.M."/>
            <person name="Palazzolo M."/>
            <person name="Pittman G.S."/>
            <person name="Pan S."/>
            <person name="Pollard J."/>
            <person name="Puri V."/>
            <person name="Reese M.G."/>
            <person name="Reinert K."/>
            <person name="Remington K."/>
            <person name="Saunders R.D.C."/>
            <person name="Scheeler F."/>
            <person name="Shen H."/>
            <person name="Shue B.C."/>
            <person name="Siden-Kiamos I."/>
            <person name="Simpson M."/>
            <person name="Skupski M.P."/>
            <person name="Smith T.J."/>
            <person name="Spier E."/>
            <person name="Spradling A.C."/>
            <person name="Stapleton M."/>
            <person name="Strong R."/>
            <person name="Sun E."/>
            <person name="Svirskas R."/>
            <person name="Tector C."/>
            <person name="Turner R."/>
            <person name="Venter E."/>
            <person name="Wang A.H."/>
            <person name="Wang X."/>
            <person name="Wang Z.-Y."/>
            <person name="Wassarman D.A."/>
            <person name="Weinstock G.M."/>
            <person name="Weissenbach J."/>
            <person name="Williams S.M."/>
            <person name="Woodage T."/>
            <person name="Worley K.C."/>
            <person name="Wu D."/>
            <person name="Yang S."/>
            <person name="Yao Q.A."/>
            <person name="Ye J."/>
            <person name="Yeh R.-F."/>
            <person name="Zaveri J.S."/>
            <person name="Zhan M."/>
            <person name="Zhang G."/>
            <person name="Zhao Q."/>
            <person name="Zheng L."/>
            <person name="Zheng X.H."/>
            <person name="Zhong F.N."/>
            <person name="Zhong W."/>
            <person name="Zhou X."/>
            <person name="Zhu S.C."/>
            <person name="Zhu X."/>
            <person name="Smith H.O."/>
            <person name="Gibbs R.A."/>
            <person name="Myers E.W."/>
            <person name="Rubin G.M."/>
            <person name="Venter J.C."/>
        </authorList>
    </citation>
    <scope>NUCLEOTIDE SEQUENCE [LARGE SCALE GENOMIC DNA]</scope>
    <source>
        <strain evidence="11">Berkeley</strain>
    </source>
</reference>
<reference evidence="11" key="2">
    <citation type="journal article" date="2002" name="Genome Biol.">
        <title>Annotation of the Drosophila melanogaster euchromatic genome: a systematic review.</title>
        <authorList>
            <person name="Misra S."/>
            <person name="Crosby M.A."/>
            <person name="Mungall C.J."/>
            <person name="Matthews B.B."/>
            <person name="Campbell K.S."/>
            <person name="Hradecky P."/>
            <person name="Huang Y."/>
            <person name="Kaminker J.S."/>
            <person name="Millburn G.H."/>
            <person name="Prochnik S.E."/>
            <person name="Smith C.D."/>
            <person name="Tupy J.L."/>
            <person name="Whitfield E.J."/>
            <person name="Bayraktaroglu L."/>
            <person name="Berman B.P."/>
            <person name="Bettencourt B.R."/>
            <person name="Celniker S.E."/>
            <person name="de Grey A.D.N.J."/>
            <person name="Drysdale R.A."/>
            <person name="Harris N.L."/>
            <person name="Richter J."/>
            <person name="Russo S."/>
            <person name="Schroeder A.J."/>
            <person name="Shu S.Q."/>
            <person name="Stapleton M."/>
            <person name="Yamada C."/>
            <person name="Ashburner M."/>
            <person name="Gelbart W.M."/>
            <person name="Rubin G.M."/>
            <person name="Lewis S.E."/>
        </authorList>
    </citation>
    <scope>GENOME REANNOTATION</scope>
    <source>
        <strain evidence="11">Berkeley</strain>
    </source>
</reference>
<reference evidence="9" key="3">
    <citation type="submission" date="2003-02" db="EMBL/GenBank/DDBJ databases">
        <authorList>
            <person name="Stapleton M."/>
            <person name="Brokstein P."/>
            <person name="Hong L."/>
            <person name="Agbayani A."/>
            <person name="Carlson J."/>
            <person name="Champe M."/>
            <person name="Chavez C."/>
            <person name="Dorsett V."/>
            <person name="Dresnek D."/>
            <person name="Farfan D."/>
            <person name="Frise E."/>
            <person name="George R."/>
            <person name="Gonzalez M."/>
            <person name="Guarin H."/>
            <person name="Kronmiller B."/>
            <person name="Li P."/>
            <person name="Liao G."/>
            <person name="Miranda A."/>
            <person name="Mungall C.J."/>
            <person name="Nunoo J."/>
            <person name="Pacleb J."/>
            <person name="Paragas V."/>
            <person name="Park S."/>
            <person name="Patel S."/>
            <person name="Phouanenavong S."/>
            <person name="Wan K."/>
            <person name="Yu C."/>
            <person name="Lewis S.E."/>
            <person name="Rubin G.M."/>
            <person name="Celniker S."/>
        </authorList>
    </citation>
    <scope>NUCLEOTIDE SEQUENCE [LARGE SCALE MRNA]</scope>
    <source>
        <strain evidence="9">Berkeley</strain>
    </source>
</reference>
<reference evidence="8" key="4">
    <citation type="journal article" date="2017" name="Alcohol. Clin. Exp. Res.">
        <title>Alcohol-Induced Behaviors Require a Subset of Drosophila JmjC-Domain Histone Demethylases in the Nervous System.</title>
        <authorList>
            <person name="Pinzon J.H."/>
            <person name="Reed A.R."/>
            <person name="Shalaby N.A."/>
            <person name="Buszczak M."/>
            <person name="Rodan A.R."/>
            <person name="Rothenfluh A."/>
        </authorList>
    </citation>
    <scope>DISRUPTION PHENOTYPE</scope>
</reference>
<reference evidence="8" key="5">
    <citation type="journal article" date="2017" name="Sci. Rep.">
        <title>Systematic discovery of genetic modulation by Jumonji histone demethylases in Drosophila.</title>
        <authorList>
            <person name="Shalaby N.A."/>
            <person name="Sayed R."/>
            <person name="Zhang Q."/>
            <person name="Scoggin S."/>
            <person name="Eliazer S."/>
            <person name="Rothenfluh A."/>
            <person name="Buszczak M."/>
        </authorList>
    </citation>
    <scope>FUNCTION</scope>
    <scope>SUBCELLULAR LOCATION</scope>
    <scope>DISRUPTION PHENOTYPE</scope>
</reference>
<reference evidence="8" key="6">
    <citation type="journal article" date="2018" name="Sci. Rep.">
        <title>JmjC domain proteins modulate circadian behaviors and sleep in Drosophila.</title>
        <authorList>
            <person name="Shalaby N.A."/>
            <person name="Pinzon J.H."/>
            <person name="Narayanan A.S."/>
            <person name="Jin E.J."/>
            <person name="Ritz M.P."/>
            <person name="Dove R.J."/>
            <person name="Wolfenberg H."/>
            <person name="Rodan A.R."/>
            <person name="Buszczak M."/>
            <person name="Rothenfluh A."/>
        </authorList>
    </citation>
    <scope>FUNCTION</scope>
    <scope>SUBCELLULAR LOCATION</scope>
    <scope>TISSUE SPECIFICITY</scope>
    <scope>DISRUPTION PHENOTYPE</scope>
</reference>
<reference evidence="8" key="7">
    <citation type="journal article" date="2023" name="Sci. Adv.">
        <title>The histone demethylase Kdm3 prevents auto-immune piRNAs production in Drosophila.</title>
        <authorList>
            <person name="Casier K."/>
            <person name="Autaa J."/>
            <person name="Gueguen N."/>
            <person name="Delmarre V."/>
            <person name="Marie P.P."/>
            <person name="Ronsseray S."/>
            <person name="Carre C."/>
            <person name="Brasset E."/>
            <person name="Teysset L."/>
            <person name="Boivin A."/>
        </authorList>
    </citation>
    <scope>FUNCTION</scope>
    <scope>DISRUPTION PHENOTYPE</scope>
</reference>
<dbReference type="EC" id="1.14.11.65" evidence="1"/>
<dbReference type="EMBL" id="AE014297">
    <property type="protein sequence ID" value="AAF54391.1"/>
    <property type="molecule type" value="Genomic_DNA"/>
</dbReference>
<dbReference type="EMBL" id="BT003787">
    <property type="protein sequence ID" value="AAO41470.1"/>
    <property type="molecule type" value="mRNA"/>
</dbReference>
<dbReference type="EMBL" id="AE014297">
    <property type="protein sequence ID" value="AHN57254.1"/>
    <property type="molecule type" value="Genomic_DNA"/>
</dbReference>
<dbReference type="RefSeq" id="NP_001287255.1">
    <property type="nucleotide sequence ID" value="NM_001300326.1"/>
</dbReference>
<dbReference type="RefSeq" id="NP_788611.1">
    <property type="nucleotide sequence ID" value="NM_176434.2"/>
</dbReference>
<dbReference type="SMR" id="Q9VHC5"/>
<dbReference type="FunCoup" id="Q9VHC5">
    <property type="interactions" value="1491"/>
</dbReference>
<dbReference type="IntAct" id="Q9VHC5">
    <property type="interactions" value="1"/>
</dbReference>
<dbReference type="STRING" id="7227.FBpp0311387"/>
<dbReference type="PaxDb" id="7227-FBpp0081541"/>
<dbReference type="DNASU" id="41143"/>
<dbReference type="EnsemblMetazoa" id="FBtr0082063">
    <property type="protein sequence ID" value="FBpp0081541"/>
    <property type="gene ID" value="FBgn0037703"/>
</dbReference>
<dbReference type="EnsemblMetazoa" id="FBtr0345178">
    <property type="protein sequence ID" value="FBpp0311387"/>
    <property type="gene ID" value="FBgn0037703"/>
</dbReference>
<dbReference type="GeneID" id="41143"/>
<dbReference type="KEGG" id="dme:Dmel_CG8165"/>
<dbReference type="UCSC" id="CG8165-RA">
    <property type="organism name" value="d. melanogaster"/>
</dbReference>
<dbReference type="AGR" id="FB:FBgn0037703"/>
<dbReference type="CTD" id="41143"/>
<dbReference type="FlyBase" id="FBgn0037703">
    <property type="gene designation" value="Kdm3"/>
</dbReference>
<dbReference type="VEuPathDB" id="VectorBase:FBgn0037703"/>
<dbReference type="eggNOG" id="KOG1356">
    <property type="taxonomic scope" value="Eukaryota"/>
</dbReference>
<dbReference type="GeneTree" id="ENSGT00940000169223"/>
<dbReference type="HOGENOM" id="CLU_004659_0_0_1"/>
<dbReference type="OMA" id="YQEVWKC"/>
<dbReference type="Reactome" id="R-DME-983231">
    <property type="pathway name" value="Factors involved in megakaryocyte development and platelet production"/>
</dbReference>
<dbReference type="BioGRID-ORCS" id="41143">
    <property type="hits" value="0 hits in 3 CRISPR screens"/>
</dbReference>
<dbReference type="ChiTaRS" id="CG8176">
    <property type="organism name" value="fly"/>
</dbReference>
<dbReference type="PRO" id="PR:Q9VHC5"/>
<dbReference type="Proteomes" id="UP000000803">
    <property type="component" value="Chromosome 3R"/>
</dbReference>
<dbReference type="Bgee" id="FBgn0037703">
    <property type="expression patterns" value="Expressed in embryonic/larval hemocyte (Drosophila) and 46 other cell types or tissues"/>
</dbReference>
<dbReference type="GO" id="GO:0000785">
    <property type="term" value="C:chromatin"/>
    <property type="evidence" value="ECO:0000314"/>
    <property type="project" value="FlyBase"/>
</dbReference>
<dbReference type="GO" id="GO:0005737">
    <property type="term" value="C:cytoplasm"/>
    <property type="evidence" value="ECO:0007669"/>
    <property type="project" value="UniProtKB-SubCell"/>
</dbReference>
<dbReference type="GO" id="GO:0000118">
    <property type="term" value="C:histone deacetylase complex"/>
    <property type="evidence" value="ECO:0000318"/>
    <property type="project" value="GO_Central"/>
</dbReference>
<dbReference type="GO" id="GO:0005634">
    <property type="term" value="C:nucleus"/>
    <property type="evidence" value="ECO:0000255"/>
    <property type="project" value="FlyBase"/>
</dbReference>
<dbReference type="GO" id="GO:0031490">
    <property type="term" value="F:chromatin DNA binding"/>
    <property type="evidence" value="ECO:0000318"/>
    <property type="project" value="GO_Central"/>
</dbReference>
<dbReference type="GO" id="GO:0032454">
    <property type="term" value="F:histone H3K9 demethylase activity"/>
    <property type="evidence" value="ECO:0000318"/>
    <property type="project" value="GO_Central"/>
</dbReference>
<dbReference type="GO" id="GO:0140683">
    <property type="term" value="F:histone H3K9me/H3K9me2 demethylase activity"/>
    <property type="evidence" value="ECO:0000315"/>
    <property type="project" value="FlyBase"/>
</dbReference>
<dbReference type="GO" id="GO:0003712">
    <property type="term" value="F:transcription coregulator activity"/>
    <property type="evidence" value="ECO:0000318"/>
    <property type="project" value="GO_Central"/>
</dbReference>
<dbReference type="GO" id="GO:0048149">
    <property type="term" value="P:behavioral response to ethanol"/>
    <property type="evidence" value="ECO:0000315"/>
    <property type="project" value="UniProtKB"/>
</dbReference>
<dbReference type="GO" id="GO:0048512">
    <property type="term" value="P:circadian behavior"/>
    <property type="evidence" value="ECO:0000315"/>
    <property type="project" value="UniProtKB"/>
</dbReference>
<dbReference type="GO" id="GO:0031452">
    <property type="term" value="P:negative regulation of heterochromatin formation"/>
    <property type="evidence" value="ECO:0000315"/>
    <property type="project" value="FlyBase"/>
</dbReference>
<dbReference type="GO" id="GO:0140542">
    <property type="term" value="P:regulation of piRNA transcription"/>
    <property type="evidence" value="ECO:0000315"/>
    <property type="project" value="UniProtKB"/>
</dbReference>
<dbReference type="GO" id="GO:0006357">
    <property type="term" value="P:regulation of transcription by RNA polymerase II"/>
    <property type="evidence" value="ECO:0000318"/>
    <property type="project" value="GO_Central"/>
</dbReference>
<dbReference type="CDD" id="cd02208">
    <property type="entry name" value="cupin_RmlC-like"/>
    <property type="match status" value="1"/>
</dbReference>
<dbReference type="FunFam" id="2.60.120.650:FF:000004">
    <property type="entry name" value="Putative lysine-specific demethylase 3B"/>
    <property type="match status" value="1"/>
</dbReference>
<dbReference type="Gene3D" id="2.60.120.650">
    <property type="entry name" value="Cupin"/>
    <property type="match status" value="1"/>
</dbReference>
<dbReference type="InterPro" id="IPR045109">
    <property type="entry name" value="JHDM2-like"/>
</dbReference>
<dbReference type="InterPro" id="IPR003347">
    <property type="entry name" value="JmjC_dom"/>
</dbReference>
<dbReference type="PANTHER" id="PTHR12549:SF38">
    <property type="entry name" value="JMJC DOMAIN-CONTAINING HISTONE DEMETHYLASE 2, ISOFORM A"/>
    <property type="match status" value="1"/>
</dbReference>
<dbReference type="PANTHER" id="PTHR12549">
    <property type="entry name" value="JMJC DOMAIN-CONTAINING HISTONE DEMETHYLATION PROTEIN"/>
    <property type="match status" value="1"/>
</dbReference>
<dbReference type="Pfam" id="PF02373">
    <property type="entry name" value="JmjC"/>
    <property type="match status" value="1"/>
</dbReference>
<dbReference type="SMART" id="SM00558">
    <property type="entry name" value="JmjC"/>
    <property type="match status" value="1"/>
</dbReference>
<dbReference type="SUPFAM" id="SSF51197">
    <property type="entry name" value="Clavaminate synthase-like"/>
    <property type="match status" value="1"/>
</dbReference>
<dbReference type="PROSITE" id="PS51184">
    <property type="entry name" value="JMJC"/>
    <property type="match status" value="1"/>
</dbReference>
<proteinExistence type="evidence at transcript level"/>
<protein>
    <recommendedName>
        <fullName evidence="10">Lysine-specific demethylase 3</fullName>
        <ecNumber evidence="1">1.14.11.65</ecNumber>
    </recommendedName>
</protein>